<reference key="1">
    <citation type="journal article" date="2009" name="J. Bacteriol.">
        <title>Genomic sequencing reveals regulatory mutations and recombinational events in the widely used MC4100 lineage of Escherichia coli K-12.</title>
        <authorList>
            <person name="Ferenci T."/>
            <person name="Zhou Z."/>
            <person name="Betteridge T."/>
            <person name="Ren Y."/>
            <person name="Liu Y."/>
            <person name="Feng L."/>
            <person name="Reeves P.R."/>
            <person name="Wang L."/>
        </authorList>
    </citation>
    <scope>NUCLEOTIDE SEQUENCE [LARGE SCALE GENOMIC DNA]</scope>
    <source>
        <strain>K12 / MC4100 / BW2952</strain>
    </source>
</reference>
<protein>
    <recommendedName>
        <fullName evidence="1">Membrane protein insertase YidC</fullName>
    </recommendedName>
    <alternativeName>
        <fullName evidence="1">Foldase YidC</fullName>
    </alternativeName>
    <alternativeName>
        <fullName evidence="1">Membrane integrase YidC</fullName>
    </alternativeName>
    <alternativeName>
        <fullName evidence="1">Membrane protein YidC</fullName>
    </alternativeName>
</protein>
<keyword id="KW-0997">Cell inner membrane</keyword>
<keyword id="KW-1003">Cell membrane</keyword>
<keyword id="KW-0143">Chaperone</keyword>
<keyword id="KW-0472">Membrane</keyword>
<keyword id="KW-0653">Protein transport</keyword>
<keyword id="KW-0812">Transmembrane</keyword>
<keyword id="KW-1133">Transmembrane helix</keyword>
<keyword id="KW-0813">Transport</keyword>
<dbReference type="EMBL" id="CP001396">
    <property type="protein sequence ID" value="ACR62710.1"/>
    <property type="molecule type" value="Genomic_DNA"/>
</dbReference>
<dbReference type="RefSeq" id="WP_000378250.1">
    <property type="nucleotide sequence ID" value="NC_012759.1"/>
</dbReference>
<dbReference type="SMR" id="C4ZYY3"/>
<dbReference type="GeneID" id="75173922"/>
<dbReference type="KEGG" id="ebw:BWG_3396"/>
<dbReference type="HOGENOM" id="CLU_016535_3_0_6"/>
<dbReference type="GO" id="GO:0005886">
    <property type="term" value="C:plasma membrane"/>
    <property type="evidence" value="ECO:0007669"/>
    <property type="project" value="UniProtKB-SubCell"/>
</dbReference>
<dbReference type="GO" id="GO:0032977">
    <property type="term" value="F:membrane insertase activity"/>
    <property type="evidence" value="ECO:0007669"/>
    <property type="project" value="InterPro"/>
</dbReference>
<dbReference type="GO" id="GO:0051205">
    <property type="term" value="P:protein insertion into membrane"/>
    <property type="evidence" value="ECO:0007669"/>
    <property type="project" value="TreeGrafter"/>
</dbReference>
<dbReference type="GO" id="GO:0015031">
    <property type="term" value="P:protein transport"/>
    <property type="evidence" value="ECO:0007669"/>
    <property type="project" value="UniProtKB-KW"/>
</dbReference>
<dbReference type="CDD" id="cd20070">
    <property type="entry name" value="5TM_YidC_Alb3"/>
    <property type="match status" value="1"/>
</dbReference>
<dbReference type="CDD" id="cd19961">
    <property type="entry name" value="EcYidC-like_peri"/>
    <property type="match status" value="1"/>
</dbReference>
<dbReference type="FunFam" id="2.70.98.90:FF:000001">
    <property type="entry name" value="Membrane protein insertase YidC"/>
    <property type="match status" value="1"/>
</dbReference>
<dbReference type="Gene3D" id="2.70.98.90">
    <property type="match status" value="1"/>
</dbReference>
<dbReference type="HAMAP" id="MF_01810">
    <property type="entry name" value="YidC_type1"/>
    <property type="match status" value="1"/>
</dbReference>
<dbReference type="InterPro" id="IPR019998">
    <property type="entry name" value="Membr_insert_YidC"/>
</dbReference>
<dbReference type="InterPro" id="IPR028053">
    <property type="entry name" value="Membr_insert_YidC_N"/>
</dbReference>
<dbReference type="InterPro" id="IPR001708">
    <property type="entry name" value="YidC/ALB3/OXA1/COX18"/>
</dbReference>
<dbReference type="InterPro" id="IPR028055">
    <property type="entry name" value="YidC/Oxa/ALB_C"/>
</dbReference>
<dbReference type="InterPro" id="IPR047196">
    <property type="entry name" value="YidC_ALB_C"/>
</dbReference>
<dbReference type="InterPro" id="IPR038221">
    <property type="entry name" value="YidC_periplasmic_sf"/>
</dbReference>
<dbReference type="NCBIfam" id="NF002351">
    <property type="entry name" value="PRK01318.1-1"/>
    <property type="match status" value="1"/>
</dbReference>
<dbReference type="NCBIfam" id="NF002352">
    <property type="entry name" value="PRK01318.1-3"/>
    <property type="match status" value="1"/>
</dbReference>
<dbReference type="NCBIfam" id="NF002353">
    <property type="entry name" value="PRK01318.1-4"/>
    <property type="match status" value="1"/>
</dbReference>
<dbReference type="NCBIfam" id="TIGR03593">
    <property type="entry name" value="yidC_nterm"/>
    <property type="match status" value="1"/>
</dbReference>
<dbReference type="NCBIfam" id="TIGR03592">
    <property type="entry name" value="yidC_oxa1_cterm"/>
    <property type="match status" value="1"/>
</dbReference>
<dbReference type="PANTHER" id="PTHR12428:SF65">
    <property type="entry name" value="CYTOCHROME C OXIDASE ASSEMBLY PROTEIN COX18, MITOCHONDRIAL"/>
    <property type="match status" value="1"/>
</dbReference>
<dbReference type="PANTHER" id="PTHR12428">
    <property type="entry name" value="OXA1"/>
    <property type="match status" value="1"/>
</dbReference>
<dbReference type="Pfam" id="PF02096">
    <property type="entry name" value="60KD_IMP"/>
    <property type="match status" value="1"/>
</dbReference>
<dbReference type="Pfam" id="PF14849">
    <property type="entry name" value="YidC_periplas"/>
    <property type="match status" value="1"/>
</dbReference>
<dbReference type="PRINTS" id="PR00701">
    <property type="entry name" value="60KDINNERMP"/>
</dbReference>
<dbReference type="PRINTS" id="PR01900">
    <property type="entry name" value="YIDCPROTEIN"/>
</dbReference>
<evidence type="ECO:0000255" key="1">
    <source>
        <dbReference type="HAMAP-Rule" id="MF_01810"/>
    </source>
</evidence>
<evidence type="ECO:0000256" key="2">
    <source>
        <dbReference type="SAM" id="MobiDB-lite"/>
    </source>
</evidence>
<feature type="chain" id="PRO_1000215970" description="Membrane protein insertase YidC">
    <location>
        <begin position="1"/>
        <end position="548"/>
    </location>
</feature>
<feature type="transmembrane region" description="Helical" evidence="1">
    <location>
        <begin position="6"/>
        <end position="26"/>
    </location>
</feature>
<feature type="transmembrane region" description="Helical" evidence="1">
    <location>
        <begin position="350"/>
        <end position="370"/>
    </location>
</feature>
<feature type="transmembrane region" description="Helical" evidence="1">
    <location>
        <begin position="420"/>
        <end position="440"/>
    </location>
</feature>
<feature type="transmembrane region" description="Helical" evidence="1">
    <location>
        <begin position="458"/>
        <end position="478"/>
    </location>
</feature>
<feature type="transmembrane region" description="Helical" evidence="1">
    <location>
        <begin position="499"/>
        <end position="519"/>
    </location>
</feature>
<feature type="region of interest" description="Disordered" evidence="2">
    <location>
        <begin position="28"/>
        <end position="55"/>
    </location>
</feature>
<feature type="compositionally biased region" description="Low complexity" evidence="2">
    <location>
        <begin position="30"/>
        <end position="50"/>
    </location>
</feature>
<name>YIDC_ECOBW</name>
<proteinExistence type="inferred from homology"/>
<accession>C4ZYY3</accession>
<organism>
    <name type="scientific">Escherichia coli (strain K12 / MC4100 / BW2952)</name>
    <dbReference type="NCBI Taxonomy" id="595496"/>
    <lineage>
        <taxon>Bacteria</taxon>
        <taxon>Pseudomonadati</taxon>
        <taxon>Pseudomonadota</taxon>
        <taxon>Gammaproteobacteria</taxon>
        <taxon>Enterobacterales</taxon>
        <taxon>Enterobacteriaceae</taxon>
        <taxon>Escherichia</taxon>
    </lineage>
</organism>
<sequence length="548" mass="61526">MDSQRNLLVIALLFVSFMIWQAWEQDKNPQPQAQQTTQTTTTAAGSAADQGVPASGQGKLISVKTDVLDLTINTRGGDVEQALLPAYPKELNSTQPFQLLETSPQFIYQAQSGLTGRDGPDNPANGPRPLYNVEKDAYVLAEGQNELQVPMTYTDAAGNTFTKTFVLKRGDYAVNVNYNVQNAGEKPLEISSFGQLKQSITLPPHLDTGSSNFALHTFRGAAYSTPDEKYEKYKFDTIADNENLNISSKGGWVAMLQQYFATAWIPHNDGTNNFYTANLGNGIAAIGYKSQPVLVQPGQTGAMNSTLWVGPEIQDKMAAVAPHLDLTVDYGWLWFISQPLFKLLKWIHSFVGNWGFSIIIITFIVRGIMYPLTKAQYTSMAKMRMLQPKIQAMRERLGDDKQRISQEMMALYKAEKVNPLGGCFPLLIQMPIFLALYYMLMGSVELRQAPFALWIHDLSAQDPYYILPILMGVTMFFIQKMSPTTVTDPMQQKIMTFMPVIFTVFFLWFPSGLVLYYIVSNLVTIIQQQLIYRGLEKRGLHSREKKKS</sequence>
<gene>
    <name evidence="1" type="primary">yidC</name>
    <name type="ordered locus">BWG_3396</name>
</gene>
<comment type="function">
    <text evidence="1">Required for the insertion and/or proper folding and/or complex formation of integral membrane proteins into the membrane. Involved in integration of membrane proteins that insert both dependently and independently of the Sec translocase complex, as well as at least some lipoproteins. Aids folding of multispanning membrane proteins.</text>
</comment>
<comment type="subunit">
    <text evidence="1">Interacts with the Sec translocase complex via SecD. Specifically interacts with transmembrane segments of nascent integral membrane proteins during membrane integration.</text>
</comment>
<comment type="subcellular location">
    <subcellularLocation>
        <location evidence="1">Cell inner membrane</location>
        <topology evidence="1">Multi-pass membrane protein</topology>
    </subcellularLocation>
</comment>
<comment type="similarity">
    <text evidence="1">Belongs to the OXA1/ALB3/YidC family. Type 1 subfamily.</text>
</comment>